<feature type="signal peptide">
    <location>
        <begin position="1"/>
        <end position="23"/>
    </location>
</feature>
<feature type="chain" id="PRO_0000033223" description="T-cell surface glycoprotein CD5">
    <location>
        <begin position="24"/>
        <end position="494"/>
    </location>
</feature>
<feature type="topological domain" description="Extracellular" evidence="2">
    <location>
        <begin position="25"/>
        <end position="371"/>
    </location>
</feature>
<feature type="transmembrane region" description="Helical" evidence="2">
    <location>
        <begin position="372"/>
        <end position="401"/>
    </location>
</feature>
<feature type="topological domain" description="Cytoplasmic" evidence="2">
    <location>
        <begin position="402"/>
        <end position="494"/>
    </location>
</feature>
<feature type="domain" description="SRCR 1" evidence="3">
    <location>
        <begin position="34"/>
        <end position="133"/>
    </location>
</feature>
<feature type="domain" description="SRCR 2" evidence="3">
    <location>
        <begin position="159"/>
        <end position="268"/>
    </location>
</feature>
<feature type="domain" description="SRCR 3" evidence="3">
    <location>
        <begin position="276"/>
        <end position="367"/>
    </location>
</feature>
<feature type="region of interest" description="Disordered" evidence="4">
    <location>
        <begin position="439"/>
        <end position="494"/>
    </location>
</feature>
<feature type="compositionally biased region" description="Polar residues" evidence="4">
    <location>
        <begin position="439"/>
        <end position="461"/>
    </location>
</feature>
<feature type="compositionally biased region" description="Polar residues" evidence="4">
    <location>
        <begin position="473"/>
        <end position="483"/>
    </location>
</feature>
<feature type="modified residue" description="Phosphoserine" evidence="1">
    <location>
        <position position="438"/>
    </location>
</feature>
<feature type="modified residue" description="Phosphotyrosine" evidence="6">
    <location>
        <position position="452"/>
    </location>
</feature>
<feature type="modified residue" description="Phosphoserine" evidence="1">
    <location>
        <position position="459"/>
    </location>
</feature>
<feature type="modified residue" description="Phosphoserine" evidence="11">
    <location>
        <position position="482"/>
    </location>
</feature>
<feature type="modified residue" description="Phosphoserine" evidence="11">
    <location>
        <position position="484"/>
    </location>
</feature>
<feature type="modified residue" description="Phosphotyrosine" evidence="6">
    <location>
        <position position="486"/>
    </location>
</feature>
<feature type="glycosylation site" description="N-linked (GlcNAc...) asparagine" evidence="2">
    <location>
        <position position="117"/>
    </location>
</feature>
<feature type="glycosylation site" description="N-linked (GlcNAc...) asparagine" evidence="2">
    <location>
        <position position="118"/>
    </location>
</feature>
<feature type="glycosylation site" description="N-linked (GlcNAc...) asparagine" evidence="2">
    <location>
        <position position="178"/>
    </location>
</feature>
<feature type="glycosylation site" description="N-linked (GlcNAc...) asparagine" evidence="2">
    <location>
        <position position="241"/>
    </location>
</feature>
<feature type="disulfide bond" evidence="3">
    <location>
        <begin position="43"/>
        <end position="85"/>
    </location>
</feature>
<feature type="disulfide bond" evidence="3">
    <location>
        <begin position="59"/>
        <end position="125"/>
    </location>
</feature>
<feature type="disulfide bond" evidence="3">
    <location>
        <begin position="80"/>
        <end position="132"/>
    </location>
</feature>
<feature type="disulfide bond" evidence="3">
    <location>
        <begin position="106"/>
        <end position="116"/>
    </location>
</feature>
<feature type="disulfide bond" evidence="3">
    <location>
        <begin position="201"/>
        <end position="267"/>
    </location>
</feature>
<feature type="disulfide bond" evidence="3">
    <location>
        <begin position="244"/>
        <end position="250"/>
    </location>
</feature>
<feature type="disulfide bond" evidence="3">
    <location>
        <begin position="285"/>
        <end position="321"/>
    </location>
</feature>
<feature type="disulfide bond" evidence="3">
    <location>
        <begin position="301"/>
        <end position="358"/>
    </location>
</feature>
<feature type="disulfide bond" evidence="3">
    <location>
        <begin position="316"/>
        <end position="366"/>
    </location>
</feature>
<feature type="disulfide bond" evidence="3">
    <location>
        <begin position="341"/>
        <end position="349"/>
    </location>
</feature>
<feature type="mutagenesis site" description="Complete loss of LCK binding." evidence="6">
    <original>Y</original>
    <variation>F</variation>
    <location>
        <position position="452"/>
    </location>
</feature>
<feature type="mutagenesis site" description="No loss of LCK binding." evidence="6">
    <original>Y</original>
    <variation>F</variation>
    <location>
        <position position="464"/>
    </location>
</feature>
<feature type="mutagenesis site" description="Complete loss of LCK binding." evidence="6">
    <original>Y</original>
    <variation>F</variation>
    <location>
        <position position="486"/>
    </location>
</feature>
<gene>
    <name type="primary">Cd5</name>
    <name type="synonym">Ly-1</name>
</gene>
<proteinExistence type="evidence at protein level"/>
<dbReference type="EMBL" id="M15177">
    <property type="protein sequence ID" value="AAA39453.1"/>
    <property type="molecule type" value="mRNA"/>
</dbReference>
<dbReference type="EMBL" id="U09204">
    <property type="protein sequence ID" value="AAC52187.1"/>
    <property type="molecule type" value="Genomic_DNA"/>
</dbReference>
<dbReference type="CCDS" id="CCDS29586.1"/>
<dbReference type="PIR" id="A29079">
    <property type="entry name" value="A29079"/>
</dbReference>
<dbReference type="RefSeq" id="NP_031676.3">
    <property type="nucleotide sequence ID" value="NM_007650.3"/>
</dbReference>
<dbReference type="SMR" id="P13379"/>
<dbReference type="FunCoup" id="P13379">
    <property type="interactions" value="478"/>
</dbReference>
<dbReference type="IntAct" id="P13379">
    <property type="interactions" value="5"/>
</dbReference>
<dbReference type="STRING" id="10090.ENSMUSP00000025571"/>
<dbReference type="GlyCosmos" id="P13379">
    <property type="glycosylation" value="4 sites, No reported glycans"/>
</dbReference>
<dbReference type="GlyGen" id="P13379">
    <property type="glycosylation" value="5 sites"/>
</dbReference>
<dbReference type="iPTMnet" id="P13379"/>
<dbReference type="PhosphoSitePlus" id="P13379"/>
<dbReference type="SwissPalm" id="P13379"/>
<dbReference type="jPOST" id="P13379"/>
<dbReference type="PaxDb" id="10090-ENSMUSP00000025571"/>
<dbReference type="PeptideAtlas" id="P13379"/>
<dbReference type="ProteomicsDB" id="283749"/>
<dbReference type="Antibodypedia" id="4206">
    <property type="antibodies" value="4159 antibodies from 55 providers"/>
</dbReference>
<dbReference type="DNASU" id="12507"/>
<dbReference type="Ensembl" id="ENSMUST00000025571.9">
    <property type="protein sequence ID" value="ENSMUSP00000025571.8"/>
    <property type="gene ID" value="ENSMUSG00000024669.9"/>
</dbReference>
<dbReference type="GeneID" id="12507"/>
<dbReference type="KEGG" id="mmu:12507"/>
<dbReference type="UCSC" id="uc008gqv.1">
    <property type="organism name" value="mouse"/>
</dbReference>
<dbReference type="AGR" id="MGI:88340"/>
<dbReference type="CTD" id="921"/>
<dbReference type="MGI" id="MGI:88340">
    <property type="gene designation" value="Cd5"/>
</dbReference>
<dbReference type="VEuPathDB" id="HostDB:ENSMUSG00000024669"/>
<dbReference type="eggNOG" id="ENOG502RYTM">
    <property type="taxonomic scope" value="Eukaryota"/>
</dbReference>
<dbReference type="GeneTree" id="ENSGT00390000017536"/>
<dbReference type="HOGENOM" id="CLU_047656_0_0_1"/>
<dbReference type="InParanoid" id="P13379"/>
<dbReference type="OMA" id="VCSGFQP"/>
<dbReference type="OrthoDB" id="544868at2759"/>
<dbReference type="PhylomeDB" id="P13379"/>
<dbReference type="TreeFam" id="TF329295"/>
<dbReference type="BioGRID-ORCS" id="12507">
    <property type="hits" value="2 hits in 78 CRISPR screens"/>
</dbReference>
<dbReference type="PRO" id="PR:P13379"/>
<dbReference type="Proteomes" id="UP000000589">
    <property type="component" value="Chromosome 19"/>
</dbReference>
<dbReference type="RNAct" id="P13379">
    <property type="molecule type" value="protein"/>
</dbReference>
<dbReference type="Bgee" id="ENSMUSG00000024669">
    <property type="expression patterns" value="Expressed in thymus and 49 other cell types or tissues"/>
</dbReference>
<dbReference type="ExpressionAtlas" id="P13379">
    <property type="expression patterns" value="baseline and differential"/>
</dbReference>
<dbReference type="GO" id="GO:0009897">
    <property type="term" value="C:external side of plasma membrane"/>
    <property type="evidence" value="ECO:0000314"/>
    <property type="project" value="MGI"/>
</dbReference>
<dbReference type="GO" id="GO:0005886">
    <property type="term" value="C:plasma membrane"/>
    <property type="evidence" value="ECO:0000266"/>
    <property type="project" value="MGI"/>
</dbReference>
<dbReference type="GO" id="GO:0097190">
    <property type="term" value="P:apoptotic signaling pathway"/>
    <property type="evidence" value="ECO:0000314"/>
    <property type="project" value="MGI"/>
</dbReference>
<dbReference type="GO" id="GO:0031295">
    <property type="term" value="P:T cell costimulation"/>
    <property type="evidence" value="ECO:0000314"/>
    <property type="project" value="MGI"/>
</dbReference>
<dbReference type="FunFam" id="3.10.250.10:FF:000028">
    <property type="entry name" value="T-cell surface glycoprotein CD5"/>
    <property type="match status" value="1"/>
</dbReference>
<dbReference type="FunFam" id="3.10.250.10:FF:000030">
    <property type="entry name" value="T-cell surface glycoprotein CD5"/>
    <property type="match status" value="1"/>
</dbReference>
<dbReference type="Gene3D" id="3.10.250.10">
    <property type="entry name" value="SRCR-like domain"/>
    <property type="match status" value="2"/>
</dbReference>
<dbReference type="InterPro" id="IPR001190">
    <property type="entry name" value="SRCR"/>
</dbReference>
<dbReference type="InterPro" id="IPR036772">
    <property type="entry name" value="SRCR-like_dom_sf"/>
</dbReference>
<dbReference type="InterPro" id="IPR003566">
    <property type="entry name" value="Tcell_CD5"/>
</dbReference>
<dbReference type="PANTHER" id="PTHR47309">
    <property type="entry name" value="T-CELL SURFACE GLYCOPROTEIN CD5"/>
    <property type="match status" value="1"/>
</dbReference>
<dbReference type="PANTHER" id="PTHR47309:SF1">
    <property type="entry name" value="T-CELL SURFACE GLYCOPROTEIN CD5"/>
    <property type="match status" value="1"/>
</dbReference>
<dbReference type="Pfam" id="PF00530">
    <property type="entry name" value="SRCR"/>
    <property type="match status" value="1"/>
</dbReference>
<dbReference type="PRINTS" id="PR00258">
    <property type="entry name" value="SPERACTRCPTR"/>
</dbReference>
<dbReference type="PRINTS" id="PR01409">
    <property type="entry name" value="TCELLCD5"/>
</dbReference>
<dbReference type="SMART" id="SM00202">
    <property type="entry name" value="SR"/>
    <property type="match status" value="2"/>
</dbReference>
<dbReference type="SUPFAM" id="SSF56487">
    <property type="entry name" value="SRCR-like"/>
    <property type="match status" value="2"/>
</dbReference>
<dbReference type="PROSITE" id="PS50287">
    <property type="entry name" value="SRCR_2"/>
    <property type="match status" value="3"/>
</dbReference>
<sequence>MDSHEVLLAATYLLGTLAAFCLGQSGRGGLDIQVMLSGSNSKCQGQVEIQMENKWKTVCSSSWRLSQDHSKNAQQASAVCKQLRCGDPLALGPFPSLNRPQNQVFCQGSPWSISNCNNTSSQDQCLPLSLICLEPQRTTPPPTTTPPTTVPEPTAPPRLQLVPGHEGLRCTGVVEFYNGSWGGTILYKAKDRPLGLGNLICKSLQCGSFLTHLSGTEAAGTPAPAELRDPRPLPIRWEAPNGSCVSLQQCFQKTTAQEGGQALTVICSDFQPKVQSRLVGGSSVCEGIAEVRQRSQWEALCDSSAARGRGRWEELCREQQCGDLISFHTVDADKTSPGFLCAQEKLSQCYHLQKKKHCNKRVFVTCQDPNPAGLAPGTVASIILTLVLLVVLLAMCGPLVYKKLVKKFRQKKQRQWIGPTGVNQNMSFHRSHTATVRSQVENPTASHVDNEYSQPPRNSHLSAYPALEGALHRSSTQPDNSSDSDYDLQVAQRL</sequence>
<protein>
    <recommendedName>
        <fullName>T-cell surface glycoprotein CD5</fullName>
    </recommendedName>
    <alternativeName>
        <fullName>Lymphocyte antigen 1</fullName>
        <shortName>Ly-1</shortName>
        <shortName>Lyt-1</shortName>
    </alternativeName>
    <cdAntigenName>CD5</cdAntigenName>
</protein>
<accession>P13379</accession>
<keyword id="KW-1003">Cell membrane</keyword>
<keyword id="KW-1015">Disulfide bond</keyword>
<keyword id="KW-0325">Glycoprotein</keyword>
<keyword id="KW-0472">Membrane</keyword>
<keyword id="KW-0597">Phosphoprotein</keyword>
<keyword id="KW-0675">Receptor</keyword>
<keyword id="KW-1185">Reference proteome</keyword>
<keyword id="KW-0677">Repeat</keyword>
<keyword id="KW-0732">Signal</keyword>
<keyword id="KW-0812">Transmembrane</keyword>
<keyword id="KW-1133">Transmembrane helix</keyword>
<evidence type="ECO:0000250" key="1">
    <source>
        <dbReference type="UniProtKB" id="P06127"/>
    </source>
</evidence>
<evidence type="ECO:0000255" key="2"/>
<evidence type="ECO:0000255" key="3">
    <source>
        <dbReference type="PROSITE-ProRule" id="PRU00196"/>
    </source>
</evidence>
<evidence type="ECO:0000256" key="4">
    <source>
        <dbReference type="SAM" id="MobiDB-lite"/>
    </source>
</evidence>
<evidence type="ECO:0000269" key="5">
    <source>
    </source>
</evidence>
<evidence type="ECO:0000269" key="6">
    <source>
    </source>
</evidence>
<evidence type="ECO:0000269" key="7">
    <source>
    </source>
</evidence>
<evidence type="ECO:0000269" key="8">
    <source>
    </source>
</evidence>
<evidence type="ECO:0000269" key="9">
    <source>
    </source>
</evidence>
<evidence type="ECO:0000269" key="10">
    <source>
    </source>
</evidence>
<evidence type="ECO:0007744" key="11">
    <source>
    </source>
</evidence>
<name>CD5_MOUSE</name>
<reference key="1">
    <citation type="journal article" date="1987" name="Proc. Natl. Acad. Sci. U.S.A.">
        <title>Molecular cloning of Ly-1, a membrane glycoprotein of mouse T lymphocytes and a subset of B cells: molecular homology to its human counterpart Leu-1/T1 (CD5).</title>
        <authorList>
            <person name="Huang H.-J.S."/>
            <person name="Jones N.H."/>
            <person name="Strominger J.L."/>
            <person name="Herzenberg L.A."/>
        </authorList>
    </citation>
    <scope>NUCLEOTIDE SEQUENCE [MRNA]</scope>
    <source>
        <tissue>T-cell</tissue>
    </source>
</reference>
<reference key="2">
    <citation type="journal article" date="1995" name="J. Immunol.">
        <title>Cloning of the murine CD5 promoter and its tissue-specific regulation.</title>
        <authorList>
            <person name="Weichert T.R."/>
            <person name="Schwartz R.C."/>
        </authorList>
    </citation>
    <scope>NUCLEOTIDE SEQUENCE [GENOMIC DNA] OF 1-17</scope>
    <source>
        <strain>NIH Swiss</strain>
    </source>
</reference>
<reference key="3">
    <citation type="journal article" date="1996" name="J. Exp. Med.">
        <title>Identification of a novel inducible cell-surface ligand of CD5 on activated lymphocytes.</title>
        <authorList>
            <person name="Biancone L."/>
            <person name="Bowen M.A."/>
            <person name="Lim A."/>
            <person name="Aruffo A."/>
            <person name="Andres G."/>
            <person name="Stamenkovic I."/>
        </authorList>
    </citation>
    <scope>INTERACTION WITH CD5L</scope>
    <scope>FUNCTION</scope>
</reference>
<reference key="4">
    <citation type="journal article" date="1998" name="Int. Immunol.">
        <title>A role for CD5 in cognate interactions between T cells and B cells, and identification of a novel ligand for CD5.</title>
        <authorList>
            <person name="Bikah G."/>
            <person name="Lynd F.M."/>
            <person name="Aruffo A.A."/>
            <person name="Ledbetter J.A."/>
            <person name="Bondada S."/>
        </authorList>
    </citation>
    <scope>FUNCTION</scope>
    <scope>INTERACTION WITH CD5L AND CD72</scope>
</reference>
<reference key="5">
    <citation type="journal article" date="2000" name="Int. Immunol.">
        <title>Negative regulation of B cell receptor-mediated signaling in B-1 cells through CD5 and Ly49 co-receptors via Lyn kinase activity.</title>
        <authorList>
            <person name="Ochi H."/>
            <person name="Watanabe T."/>
        </authorList>
    </citation>
    <scope>PHOSPHORYLATION BY LYN</scope>
    <scope>INTERACTION WITH PTPN6/SHP-1</scope>
</reference>
<reference key="6">
    <citation type="journal article" date="2001" name="Int. Immunol.">
        <title>Determination of the tyrosine phosphorylation sites in the T cell transmembrane glycoprotein CD5.</title>
        <authorList>
            <person name="Dennehy K.M."/>
            <person name="Ferris W.F."/>
            <person name="Veenstra H."/>
            <person name="Zuckerman L.A."/>
            <person name="Killeen N."/>
            <person name="Beyers A.D."/>
        </authorList>
    </citation>
    <scope>FUNCTION</scope>
    <scope>MUTAGENESIS OF TYR-452; TYR-464 AND TYR-486</scope>
    <scope>PHOSPHORYLATION AT TYR-452 AND TYR-486</scope>
</reference>
<reference key="7">
    <citation type="journal article" date="2010" name="Cell">
        <title>A tissue-specific atlas of mouse protein phosphorylation and expression.</title>
        <authorList>
            <person name="Huttlin E.L."/>
            <person name="Jedrychowski M.P."/>
            <person name="Elias J.E."/>
            <person name="Goswami T."/>
            <person name="Rad R."/>
            <person name="Beausoleil S.A."/>
            <person name="Villen J."/>
            <person name="Haas W."/>
            <person name="Sowa M.E."/>
            <person name="Gygi S.P."/>
        </authorList>
    </citation>
    <scope>PHOSPHORYLATION [LARGE SCALE ANALYSIS] AT SER-482 AND SER-484</scope>
    <scope>IDENTIFICATION BY MASS SPECTROMETRY [LARGE SCALE ANALYSIS]</scope>
    <source>
        <tissue>Lung</tissue>
        <tissue>Spleen</tissue>
    </source>
</reference>
<reference key="8">
    <citation type="journal article" date="2014" name="Immunol. Invest.">
        <title>Interaction of CD5 and CD72 is involved in regulatory T and B cell homeostasis.</title>
        <authorList>
            <person name="Zheng M."/>
            <person name="Xing C."/>
            <person name="Xiao H."/>
            <person name="Ma N."/>
            <person name="Wang X."/>
            <person name="Han G."/>
            <person name="Chen G."/>
            <person name="Hou C."/>
            <person name="Shen B."/>
            <person name="Li Y."/>
            <person name="Wang R."/>
        </authorList>
    </citation>
    <scope>FUNCTION</scope>
    <scope>INTERACTION WITH CD72</scope>
</reference>
<reference key="9">
    <citation type="journal article" date="2022" name="J. Immunol.">
        <title>CD5 Suppresses IL-15-Induced Proliferation of Human Memory CD8+ T Cells by Inhibiting mTOR Pathways.</title>
        <authorList>
            <person name="Choi Y.J."/>
            <person name="Lee H."/>
            <person name="Kim J.H."/>
            <person name="Kim S.Y."/>
            <person name="Koh J.Y."/>
            <person name="Sa M."/>
            <person name="Park S.H."/>
            <person name="Shin E.C."/>
        </authorList>
    </citation>
    <scope>FUNCTION</scope>
</reference>
<reference key="10">
    <citation type="journal article" date="2022" name="Front. Immunol.">
        <title>CD5 Controls Gut Immunity by Shaping the Cytokine Profile of Intestinal T Cells.</title>
        <authorList>
            <person name="Schuster C."/>
            <person name="Kiaf B."/>
            <person name="Hatzihristidis T."/>
            <person name="Ruckdeschel A."/>
            <person name="Nieves-Bonilla J."/>
            <person name="Ishikawa Y."/>
            <person name="Zhao B."/>
            <person name="Zheng P."/>
            <person name="Love P.E."/>
            <person name="Kissler S."/>
        </authorList>
    </citation>
    <scope>FUNCTION</scope>
    <scope>DISRUPTION PHENOTYPE</scope>
</reference>
<comment type="function">
    <text evidence="1 7 8 9 10">Lymphoid-specific receptor expressed by all T-cells and in a subset of B-cells known as B1a cells. Plays a role in the regulation of TCR and BCR signaling, thymocyte selection, T-cell effector differentiation and immune tolerance (PubMed:35720357). Acts by interacting with several ligands expressed on B-cells such as CD5L or CD72 and thereby plays an important role in contact-mediated, T-dependent B-cell activation and in the maintenance of regulatory T and B-cell homeostasis (PubMed:24950378, PubMed:9064341, PubMed:9723705). Functions as a negative regulator of TCR signaling during thymocyte development by associating with several signaling proteins including LCK, CD3Z chain, PI3K or CBL (PubMed:11157848). Mechanistically, co-engagement of CD3 with CD5 enhances phosphorylated CBL recruitment leading to increased VAV1 phosphorylation and degradation (By similarity). Modulates B-cell biology through ERK1/2 activation in a Ca(2+)-dependent pathway via the non-selective Ca(2+) channel TRPC1, leading to IL-10 production (By similarity).</text>
</comment>
<comment type="subunit">
    <text evidence="1 5 7 9 10">Interacts with CD72/LYB-2 (PubMed:24950378, PubMed:9723705). Interacts with PTPN6/SHP-1 (PubMed:11007759). Interacts with CBL (By similarity). Interacts with CD5L (PubMed:9064341, PubMed:9723705).</text>
</comment>
<comment type="interaction">
    <interactant intactId="EBI-12600513">
        <id>P13379</id>
    </interactant>
    <interactant intactId="EBI-640919">
        <id>P22682</id>
        <label>Cbl</label>
    </interactant>
    <organismsDiffer>false</organismsDiffer>
    <experiments>5</experiments>
</comment>
<comment type="interaction">
    <interactant intactId="EBI-12600513">
        <id>P13379</id>
    </interactant>
    <interactant intactId="EBI-3649276">
        <id>Q3TTA7</id>
        <label>Cblb</label>
    </interactant>
    <organismsDiffer>false</organismsDiffer>
    <experiments>4</experiments>
</comment>
<comment type="subcellular location">
    <subcellularLocation>
        <location>Cell membrane</location>
        <topology>Single-pass type I membrane protein</topology>
    </subcellularLocation>
</comment>
<comment type="PTM">
    <text evidence="5 6">Phosphorylated on serine, threonine and tyrosine residues following TCR stimulation (PubMed:11007759). Phosphorylated by LCK on Tyr-452 and Tyr-486 upon TCR engagement (PubMed:11157848).</text>
</comment>
<comment type="disruption phenotype">
    <text evidence="8">Induced Cd5 deficiency compromises gut barrier integrity accompanied with reduced expression of several anti-bacterial peptides and mucus components in gut epithelial cells. The frequency of peripherally-induced regulatory T-cells is decreased while the propensity of T-cells to secrete IL-17A is increased due to a STAT3 activation.</text>
</comment>
<organism>
    <name type="scientific">Mus musculus</name>
    <name type="common">Mouse</name>
    <dbReference type="NCBI Taxonomy" id="10090"/>
    <lineage>
        <taxon>Eukaryota</taxon>
        <taxon>Metazoa</taxon>
        <taxon>Chordata</taxon>
        <taxon>Craniata</taxon>
        <taxon>Vertebrata</taxon>
        <taxon>Euteleostomi</taxon>
        <taxon>Mammalia</taxon>
        <taxon>Eutheria</taxon>
        <taxon>Euarchontoglires</taxon>
        <taxon>Glires</taxon>
        <taxon>Rodentia</taxon>
        <taxon>Myomorpha</taxon>
        <taxon>Muroidea</taxon>
        <taxon>Muridae</taxon>
        <taxon>Murinae</taxon>
        <taxon>Mus</taxon>
        <taxon>Mus</taxon>
    </lineage>
</organism>